<organism>
    <name type="scientific">Zygosaccharomyces rouxii (strain ATCC 2623 / CBS 732 / NBRC 1130 / NCYC 568 / NRRL Y-229)</name>
    <dbReference type="NCBI Taxonomy" id="559307"/>
    <lineage>
        <taxon>Eukaryota</taxon>
        <taxon>Fungi</taxon>
        <taxon>Dikarya</taxon>
        <taxon>Ascomycota</taxon>
        <taxon>Saccharomycotina</taxon>
        <taxon>Saccharomycetes</taxon>
        <taxon>Saccharomycetales</taxon>
        <taxon>Saccharomycetaceae</taxon>
        <taxon>Zygosaccharomyces</taxon>
    </lineage>
</organism>
<comment type="subcellular location">
    <subcellularLocation>
        <location evidence="1">Vacuole membrane</location>
        <topology evidence="1">Single-pass membrane protein</topology>
    </subcellularLocation>
</comment>
<comment type="similarity">
    <text evidence="4">Belongs to the PRM5 family.</text>
</comment>
<proteinExistence type="inferred from homology"/>
<reference key="1">
    <citation type="journal article" date="2009" name="Genome Res.">
        <title>Comparative genomics of protoploid Saccharomycetaceae.</title>
        <authorList>
            <consortium name="The Genolevures Consortium"/>
            <person name="Souciet J.-L."/>
            <person name="Dujon B."/>
            <person name="Gaillardin C."/>
            <person name="Johnston M."/>
            <person name="Baret P.V."/>
            <person name="Cliften P."/>
            <person name="Sherman D.J."/>
            <person name="Weissenbach J."/>
            <person name="Westhof E."/>
            <person name="Wincker P."/>
            <person name="Jubin C."/>
            <person name="Poulain J."/>
            <person name="Barbe V."/>
            <person name="Segurens B."/>
            <person name="Artiguenave F."/>
            <person name="Anthouard V."/>
            <person name="Vacherie B."/>
            <person name="Val M.-E."/>
            <person name="Fulton R.S."/>
            <person name="Minx P."/>
            <person name="Wilson R."/>
            <person name="Durrens P."/>
            <person name="Jean G."/>
            <person name="Marck C."/>
            <person name="Martin T."/>
            <person name="Nikolski M."/>
            <person name="Rolland T."/>
            <person name="Seret M.-L."/>
            <person name="Casaregola S."/>
            <person name="Despons L."/>
            <person name="Fairhead C."/>
            <person name="Fischer G."/>
            <person name="Lafontaine I."/>
            <person name="Leh V."/>
            <person name="Lemaire M."/>
            <person name="de Montigny J."/>
            <person name="Neuveglise C."/>
            <person name="Thierry A."/>
            <person name="Blanc-Lenfle I."/>
            <person name="Bleykasten C."/>
            <person name="Diffels J."/>
            <person name="Fritsch E."/>
            <person name="Frangeul L."/>
            <person name="Goeffon A."/>
            <person name="Jauniaux N."/>
            <person name="Kachouri-Lafond R."/>
            <person name="Payen C."/>
            <person name="Potier S."/>
            <person name="Pribylova L."/>
            <person name="Ozanne C."/>
            <person name="Richard G.-F."/>
            <person name="Sacerdot C."/>
            <person name="Straub M.-L."/>
            <person name="Talla E."/>
        </authorList>
    </citation>
    <scope>NUCLEOTIDE SEQUENCE [LARGE SCALE GENOMIC DNA]</scope>
    <source>
        <strain>ATCC 2623 / CBS 732 / BCRC 21506 / NBRC 1130 / NCYC 568 / NRRL Y-229</strain>
    </source>
</reference>
<gene>
    <name type="ordered locus">ZYRO0A01628g</name>
</gene>
<evidence type="ECO:0000250" key="1"/>
<evidence type="ECO:0000255" key="2"/>
<evidence type="ECO:0000256" key="3">
    <source>
        <dbReference type="SAM" id="MobiDB-lite"/>
    </source>
</evidence>
<evidence type="ECO:0000305" key="4"/>
<accession>C5DPA1</accession>
<sequence>MAGHTVVQRALPNIASGSFAQSASKTSSHTSKTSYSAVVTPPSSDGNPNVWRANHLPDGLIYIIVGGTAAAIFAFIILWYAVARYMSRRVAKKTMYETNIQWRDTPSSGLYDHGDEKELYQSLVDHSDKNDARPKKSLIGLLGGGNGLGSSTSYDTVADADMDDDLIGGGYQERFNPVQDFVPSHFPRSSLFISPTLEVAQQNQQSKSVGRTNHFQNLSVTSLPSASESSSNLLDRPERTASPERKPKAYGRYHQRNRSSVGVSDHSHSRSHSRSKSASSFEMPNVNNNNKKHGTTPSRFLNNLLEGNDDGTT</sequence>
<dbReference type="EMBL" id="CU928173">
    <property type="protein sequence ID" value="CAR25512.1"/>
    <property type="molecule type" value="Genomic_DNA"/>
</dbReference>
<dbReference type="RefSeq" id="XP_002494445.1">
    <property type="nucleotide sequence ID" value="XM_002494400.1"/>
</dbReference>
<dbReference type="FunCoup" id="C5DPA1">
    <property type="interactions" value="74"/>
</dbReference>
<dbReference type="GeneID" id="8201736"/>
<dbReference type="KEGG" id="zro:ZYRO0A01628g"/>
<dbReference type="HOGENOM" id="CLU_061224_0_0_1"/>
<dbReference type="InParanoid" id="C5DPA1"/>
<dbReference type="Proteomes" id="UP000008536">
    <property type="component" value="Chromosome A"/>
</dbReference>
<dbReference type="GO" id="GO:0005935">
    <property type="term" value="C:cellular bud neck"/>
    <property type="evidence" value="ECO:0007669"/>
    <property type="project" value="TreeGrafter"/>
</dbReference>
<dbReference type="GO" id="GO:0000324">
    <property type="term" value="C:fungal-type vacuole"/>
    <property type="evidence" value="ECO:0007669"/>
    <property type="project" value="TreeGrafter"/>
</dbReference>
<dbReference type="GO" id="GO:0005774">
    <property type="term" value="C:vacuolar membrane"/>
    <property type="evidence" value="ECO:0007669"/>
    <property type="project" value="UniProtKB-SubCell"/>
</dbReference>
<dbReference type="InterPro" id="IPR051009">
    <property type="entry name" value="PRM"/>
</dbReference>
<dbReference type="PANTHER" id="PTHR36089">
    <property type="entry name" value="CHITIN SYNTHASE 3 COMPLEX PROTEIN CSI2-RELATED"/>
    <property type="match status" value="1"/>
</dbReference>
<dbReference type="PANTHER" id="PTHR36089:SF1">
    <property type="entry name" value="CHITIN SYNTHASE 3 COMPLEX PROTEIN CSI2-RELATED"/>
    <property type="match status" value="1"/>
</dbReference>
<keyword id="KW-0472">Membrane</keyword>
<keyword id="KW-1185">Reference proteome</keyword>
<keyword id="KW-0812">Transmembrane</keyword>
<keyword id="KW-1133">Transmembrane helix</keyword>
<keyword id="KW-0926">Vacuole</keyword>
<name>YNF8_ZYGRC</name>
<feature type="chain" id="PRO_0000409329" description="Vacuolar membrane protein ZYRO0A01628g">
    <location>
        <begin position="1"/>
        <end position="313"/>
    </location>
</feature>
<feature type="transmembrane region" description="Helical" evidence="2">
    <location>
        <begin position="59"/>
        <end position="79"/>
    </location>
</feature>
<feature type="region of interest" description="Disordered" evidence="3">
    <location>
        <begin position="22"/>
        <end position="48"/>
    </location>
</feature>
<feature type="region of interest" description="Disordered" evidence="3">
    <location>
        <begin position="221"/>
        <end position="313"/>
    </location>
</feature>
<feature type="compositionally biased region" description="Low complexity" evidence="3">
    <location>
        <begin position="22"/>
        <end position="37"/>
    </location>
</feature>
<feature type="compositionally biased region" description="Low complexity" evidence="3">
    <location>
        <begin position="221"/>
        <end position="234"/>
    </location>
</feature>
<feature type="compositionally biased region" description="Basic and acidic residues" evidence="3">
    <location>
        <begin position="235"/>
        <end position="247"/>
    </location>
</feature>
<feature type="compositionally biased region" description="Basic residues" evidence="3">
    <location>
        <begin position="248"/>
        <end position="257"/>
    </location>
</feature>
<feature type="compositionally biased region" description="Polar residues" evidence="3">
    <location>
        <begin position="285"/>
        <end position="301"/>
    </location>
</feature>
<protein>
    <recommendedName>
        <fullName>Vacuolar membrane protein ZYRO0A01628g</fullName>
    </recommendedName>
</protein>